<protein>
    <recommendedName>
        <fullName>Ribonuclease pancreatic</fullName>
        <ecNumber>4.6.1.18</ecNumber>
    </recommendedName>
    <alternativeName>
        <fullName>RNase 1</fullName>
    </alternativeName>
    <alternativeName>
        <fullName>RNase A</fullName>
    </alternativeName>
</protein>
<gene>
    <name type="primary">RNASE1</name>
    <name type="synonym">RNS1</name>
</gene>
<dbReference type="EC" id="4.6.1.18"/>
<dbReference type="PIR" id="A00806">
    <property type="entry name" value="NRANE"/>
</dbReference>
<dbReference type="BMRB" id="P00658"/>
<dbReference type="GO" id="GO:0005576">
    <property type="term" value="C:extracellular region"/>
    <property type="evidence" value="ECO:0007669"/>
    <property type="project" value="UniProtKB-SubCell"/>
</dbReference>
<dbReference type="GO" id="GO:0016829">
    <property type="term" value="F:lyase activity"/>
    <property type="evidence" value="ECO:0007669"/>
    <property type="project" value="UniProtKB-KW"/>
</dbReference>
<dbReference type="GO" id="GO:0003676">
    <property type="term" value="F:nucleic acid binding"/>
    <property type="evidence" value="ECO:0007669"/>
    <property type="project" value="InterPro"/>
</dbReference>
<dbReference type="GO" id="GO:0004522">
    <property type="term" value="F:ribonuclease A activity"/>
    <property type="evidence" value="ECO:0007669"/>
    <property type="project" value="UniProtKB-EC"/>
</dbReference>
<dbReference type="GO" id="GO:0050830">
    <property type="term" value="P:defense response to Gram-positive bacterium"/>
    <property type="evidence" value="ECO:0007669"/>
    <property type="project" value="TreeGrafter"/>
</dbReference>
<dbReference type="CDD" id="cd06265">
    <property type="entry name" value="RNase_A_canonical"/>
    <property type="match status" value="1"/>
</dbReference>
<dbReference type="FunFam" id="3.10.130.10:FF:000001">
    <property type="entry name" value="Ribonuclease pancreatic"/>
    <property type="match status" value="1"/>
</dbReference>
<dbReference type="Gene3D" id="3.10.130.10">
    <property type="entry name" value="Ribonuclease A-like domain"/>
    <property type="match status" value="1"/>
</dbReference>
<dbReference type="InterPro" id="IPR001427">
    <property type="entry name" value="RNaseA"/>
</dbReference>
<dbReference type="InterPro" id="IPR036816">
    <property type="entry name" value="RNaseA-like_dom_sf"/>
</dbReference>
<dbReference type="InterPro" id="IPR023411">
    <property type="entry name" value="RNaseA_AS"/>
</dbReference>
<dbReference type="InterPro" id="IPR023412">
    <property type="entry name" value="RNaseA_domain"/>
</dbReference>
<dbReference type="PANTHER" id="PTHR11437">
    <property type="entry name" value="RIBONUCLEASE"/>
    <property type="match status" value="1"/>
</dbReference>
<dbReference type="PANTHER" id="PTHR11437:SF24">
    <property type="entry name" value="RIBONUCLEASE PANCREATIC"/>
    <property type="match status" value="1"/>
</dbReference>
<dbReference type="Pfam" id="PF00074">
    <property type="entry name" value="RnaseA"/>
    <property type="match status" value="1"/>
</dbReference>
<dbReference type="PRINTS" id="PR00794">
    <property type="entry name" value="RIBONUCLEASE"/>
</dbReference>
<dbReference type="SMART" id="SM00092">
    <property type="entry name" value="RNAse_Pc"/>
    <property type="match status" value="1"/>
</dbReference>
<dbReference type="SUPFAM" id="SSF54076">
    <property type="entry name" value="RNase A-like"/>
    <property type="match status" value="1"/>
</dbReference>
<dbReference type="PROSITE" id="PS00127">
    <property type="entry name" value="RNASE_PANCREATIC"/>
    <property type="match status" value="1"/>
</dbReference>
<feature type="chain" id="PRO_0000057216" description="Ribonuclease pancreatic">
    <location>
        <begin position="1"/>
        <end position="124"/>
    </location>
</feature>
<feature type="region of interest" description="Disordered" evidence="2">
    <location>
        <begin position="1"/>
        <end position="25"/>
    </location>
</feature>
<feature type="compositionally biased region" description="Basic and acidic residues" evidence="2">
    <location>
        <begin position="1"/>
        <end position="13"/>
    </location>
</feature>
<feature type="active site" description="Proton acceptor">
    <location>
        <position position="12"/>
    </location>
</feature>
<feature type="active site" description="Proton donor">
    <location>
        <position position="119"/>
    </location>
</feature>
<feature type="binding site">
    <location>
        <position position="7"/>
    </location>
    <ligand>
        <name>substrate</name>
    </ligand>
</feature>
<feature type="binding site">
    <location>
        <position position="10"/>
    </location>
    <ligand>
        <name>substrate</name>
    </ligand>
</feature>
<feature type="binding site">
    <location>
        <begin position="41"/>
        <end position="45"/>
    </location>
    <ligand>
        <name>substrate</name>
    </ligand>
</feature>
<feature type="binding site">
    <location>
        <position position="66"/>
    </location>
    <ligand>
        <name>substrate</name>
    </ligand>
</feature>
<feature type="binding site">
    <location>
        <position position="85"/>
    </location>
    <ligand>
        <name>substrate</name>
    </ligand>
</feature>
<feature type="disulfide bond">
    <location>
        <begin position="26"/>
        <end position="84"/>
    </location>
</feature>
<feature type="disulfide bond">
    <location>
        <begin position="40"/>
        <end position="95"/>
    </location>
</feature>
<feature type="disulfide bond">
    <location>
        <begin position="58"/>
        <end position="110"/>
    </location>
</feature>
<feature type="disulfide bond">
    <location>
        <begin position="65"/>
        <end position="72"/>
    </location>
</feature>
<organism>
    <name type="scientific">Tragelaphus oryx</name>
    <name type="common">Eland</name>
    <name type="synonym">Taurotragus oryx</name>
    <dbReference type="NCBI Taxonomy" id="9945"/>
    <lineage>
        <taxon>Eukaryota</taxon>
        <taxon>Metazoa</taxon>
        <taxon>Chordata</taxon>
        <taxon>Craniata</taxon>
        <taxon>Vertebrata</taxon>
        <taxon>Euteleostomi</taxon>
        <taxon>Mammalia</taxon>
        <taxon>Eutheria</taxon>
        <taxon>Laurasiatheria</taxon>
        <taxon>Artiodactyla</taxon>
        <taxon>Ruminantia</taxon>
        <taxon>Pecora</taxon>
        <taxon>Bovidae</taxon>
        <taxon>Bovinae</taxon>
        <taxon>Tragelaphus</taxon>
    </lineage>
</organism>
<accession>P00658</accession>
<sequence length="124" mass="13743">KETAAAKFERQHMDSSTSSASSSNYCNQMMKSRDMTKDRCKPVNTFVHZSLABVZAVCSZKBVACKBGZTBCYZSYSTMSITBCRZTGSSKYPBCAYKTTZAZKHIIVACZGBPYVPVHFBASV</sequence>
<evidence type="ECO:0000250" key="1"/>
<evidence type="ECO:0000256" key="2">
    <source>
        <dbReference type="SAM" id="MobiDB-lite"/>
    </source>
</evidence>
<evidence type="ECO:0000305" key="3"/>
<proteinExistence type="evidence at protein level"/>
<reference key="1">
    <citation type="journal article" date="1976" name="Biochim. Biophys. Acta">
        <title>Studies on the covalent structure of eland pancreatic ribonuclease.</title>
        <authorList>
            <person name="Russchen F."/>
            <person name="de Vrieze G."/>
            <person name="Gaastra W."/>
            <person name="Beintema J.J."/>
        </authorList>
    </citation>
    <scope>PARTIAL PROTEIN SEQUENCE</scope>
    <source>
        <tissue>Pancreas</tissue>
    </source>
</reference>
<comment type="function">
    <text evidence="1">Endonuclease that catalyzes the cleavage of RNA on the 3' side of pyrimidine nucleotides. Acts on single-stranded and double-stranded RNA (By similarity).</text>
</comment>
<comment type="catalytic activity">
    <reaction>
        <text>an [RNA] containing cytidine + H2O = an [RNA]-3'-cytidine-3'-phosphate + a 5'-hydroxy-ribonucleotide-3'-[RNA].</text>
        <dbReference type="EC" id="4.6.1.18"/>
    </reaction>
</comment>
<comment type="catalytic activity">
    <reaction>
        <text>an [RNA] containing uridine + H2O = an [RNA]-3'-uridine-3'-phosphate + a 5'-hydroxy-ribonucleotide-3'-[RNA].</text>
        <dbReference type="EC" id="4.6.1.18"/>
    </reaction>
</comment>
<comment type="subunit">
    <text evidence="1">Monomer. Interacts with and forms tight 1:1 complexes with RNH1. Dimerization of two such complexes may occur. Interaction with RNH1 inhibits this protein (By similarity).</text>
</comment>
<comment type="subcellular location">
    <subcellularLocation>
        <location>Secreted</location>
    </subcellularLocation>
</comment>
<comment type="tissue specificity">
    <text>Pancreas.</text>
</comment>
<comment type="similarity">
    <text evidence="3">Belongs to the pancreatic ribonuclease family.</text>
</comment>
<keyword id="KW-0903">Direct protein sequencing</keyword>
<keyword id="KW-1015">Disulfide bond</keyword>
<keyword id="KW-0255">Endonuclease</keyword>
<keyword id="KW-0378">Hydrolase</keyword>
<keyword id="KW-0456">Lyase</keyword>
<keyword id="KW-0540">Nuclease</keyword>
<keyword id="KW-0964">Secreted</keyword>
<name>RNAS1_TRAOR</name>